<comment type="function">
    <text evidence="3 4 5 10">Spindle pole body (SPB) component that acts as the gamma-tubulin complex-binding protein of the SPB outer plaque (PubMed:15120067, PubMed:15659644, PubMed:19001497). Promotes nucleation of all cytoplasmic microtubules by recruiting the gamma-tubulin complex to the spindle pole body (SPB), to the interphase microtubule organizing center (iMTOC), and to the equatorial MTOC (eMTOC) during anaphase (PubMed:15004232, PubMed:15120067, PubMed:15659644, PubMed:19001497).</text>
</comment>
<comment type="subunit">
    <text evidence="4 5 6 10">Interacts with mto2; the interaction is direct and required for efficient binding to the gamma-tubulin complex (PubMed:15659644, PubMed:15800064, PubMed:19001497). Interacts with gamma tubulin complex subunits alp4, alp6 and gtb1 (PubMed:19001497). Interacts with mcp6 (PubMed:15120067).</text>
</comment>
<comment type="subcellular location">
    <subcellularLocation>
        <location evidence="3 4 5 7 10">Cytoplasm</location>
        <location evidence="3 4 5 7 10">Cytoskeleton</location>
        <location evidence="3 4 5 7 10">Microtubule organizing center</location>
        <location evidence="3 4 5 7 10">Spindle pole body</location>
    </subcellularLocation>
    <subcellularLocation>
        <location evidence="3 5 10">Cytoplasm</location>
        <location evidence="3 5 10">Cytoskeleton</location>
        <location evidence="3 5 10">Microtubule organizing center</location>
    </subcellularLocation>
    <text evidence="3 10">Localizes at the interphase MTOC (iMTOC) and at the equatorial MTOC (eMTOC) at the end of mitosis.</text>
</comment>
<comment type="disruption phenotype">
    <text evidence="4 5 8 10">Abolishes cytoplasmic microtubule (MT) nucleation from SPB and non-SPB sites (PubMed:15120067, PubMed:19001497). Leads to MTs escaping from the nucleus to form fewer and thicker cytoplasmic MT bundles that curve around the cell tip (PubMed:15659644, PubMed:19001497). Curved cell shape (PubMed:15659644, PubMed:19001497). Leads to unclustering of centromeres at the nuclear periphery; normally, the centromeres cluster at the SPB during interphase (PubMed:17881496).</text>
</comment>
<sequence length="1115" mass="128469">MEENSSELDSNNFNVLVDNLAGLSLTDEEVRRILSPRKEGSRQLPSSTSKDEDSEEASHKYDFEIDRDSLKSDSGSPRLHQNATAPTSSTPLQSPDESVNKLNSEDEEGNSSVAPFFLDTTNFDRLNDNITTDDEQLSPVLTANQGFQSQEQYEEDSYNNYDYTSDPSSPNYISSSLDQLPHLDDEDDLQLTPIKEERNYLHSQDAPTTNALSKKISDILIPASAMKDLKDRKNALAKEFEESQPGSSLTLKEQANVIDNLRKEVFGLKLKCYFLYDQLNKFHDQEVQDIMKQNIDLKTLTMELQRAVAGYEKKISGLESRIKPDQSFNLSTPSPAPSNLITLQSRYSQALSELETTKRAFAALRKEKSKKTNYSVGAYNEDRNVLSNMLDNERREKEALLQELESLRVQLSKKVPMPAKNTDERVIETLQRSNELLRMDISMQNEALLLRKQENDRLVKQVEELTVALNSGKMNAIVEAESSKNELWDSMMVSRMKTQEQSIELTRLYKQLQDIEEDYENKLMRMEQQWREDVDQLQEYVEEITQELQDTKEVLSKSSKESDDYEEVVGKLRTEAEREIEKFEKTIRENEESISLFKEEVEKLTDEITQLSERYNDKCHEFDELQKRLQTLEEENNKAKEDSTSKTSNLLEQLKMTEAEVDSLRKENEENKQVIALKESELVKSNDNKLLLNEQIESLNDQLSQLKTEMESVTTSKESLADYLSNLKERHNDELDSLNKKLREFEGILSSNSSLKSEIEERNNQYVTLRENFDSLQNAIMETFDKQVTHCSVNHLVQQIRKLKDENKKDQSGTDKLMKKIYHCEQSLKEKTNSLETLVSEKKELKNLLDAERRSKKAIQLELENLSSQAFRRNLSGSSSPSERSQSRELKLLQASEKRLKEQVEERNSLIKNIVTRFTQLNTGSKPVNTNVEALTTISSMNQAVNMNFRELDKSIQEFKRKCQSMEREFKTELRKLDGVLEARSKRLSQLEERVKLLGAGSTSSIPNSPRASKRVSLDSEDKKLVPASPDKSAVQRGITALKRDAEGMSHIWQLRLREMEFQLKAEQEGRKRDKLGARERLQDLIRQNRSLSRQIKTDKESNSRSPSISSQEHK</sequence>
<name>MBO1_SCHPO</name>
<gene>
    <name evidence="13" type="primary">mto1</name>
    <name evidence="13" type="synonym">mbo1</name>
    <name evidence="13" type="synonym">mod20</name>
    <name evidence="13" type="ORF">SPCC417.07c</name>
</gene>
<accession>O94488</accession>
<protein>
    <recommendedName>
        <fullName evidence="11">Gamma tubulin complex adapter mto1</fullName>
    </recommendedName>
    <alternativeName>
        <fullName evidence="11">Microtubule organizer protein 1</fullName>
    </alternativeName>
    <alternativeName>
        <fullName>Morphology defective protein 20</fullName>
    </alternativeName>
</protein>
<organism>
    <name type="scientific">Schizosaccharomyces pombe (strain 972 / ATCC 24843)</name>
    <name type="common">Fission yeast</name>
    <dbReference type="NCBI Taxonomy" id="284812"/>
    <lineage>
        <taxon>Eukaryota</taxon>
        <taxon>Fungi</taxon>
        <taxon>Dikarya</taxon>
        <taxon>Ascomycota</taxon>
        <taxon>Taphrinomycotina</taxon>
        <taxon>Schizosaccharomycetes</taxon>
        <taxon>Schizosaccharomycetales</taxon>
        <taxon>Schizosaccharomycetaceae</taxon>
        <taxon>Schizosaccharomyces</taxon>
    </lineage>
</organism>
<feature type="chain" id="PRO_0000356169" description="Gamma tubulin complex adapter mto1">
    <location>
        <begin position="1"/>
        <end position="1115"/>
    </location>
</feature>
<feature type="region of interest" description="Disordered" evidence="2">
    <location>
        <begin position="25"/>
        <end position="180"/>
    </location>
</feature>
<feature type="region of interest" description="Required for interaction with mto2" evidence="10 12">
    <location>
        <begin position="523"/>
        <end position="537"/>
    </location>
</feature>
<feature type="region of interest" description="Disordered" evidence="2">
    <location>
        <begin position="1001"/>
        <end position="1037"/>
    </location>
</feature>
<feature type="region of interest" description="Disordered" evidence="2">
    <location>
        <begin position="1067"/>
        <end position="1115"/>
    </location>
</feature>
<feature type="coiled-coil region" evidence="1">
    <location>
        <begin position="445"/>
        <end position="915"/>
    </location>
</feature>
<feature type="coiled-coil region" evidence="1">
    <location>
        <begin position="1072"/>
        <end position="1102"/>
    </location>
</feature>
<feature type="compositionally biased region" description="Basic and acidic residues" evidence="2">
    <location>
        <begin position="28"/>
        <end position="41"/>
    </location>
</feature>
<feature type="compositionally biased region" description="Basic and acidic residues" evidence="2">
    <location>
        <begin position="56"/>
        <end position="71"/>
    </location>
</feature>
<feature type="compositionally biased region" description="Polar residues" evidence="2">
    <location>
        <begin position="72"/>
        <end position="102"/>
    </location>
</feature>
<feature type="compositionally biased region" description="Polar residues" evidence="2">
    <location>
        <begin position="119"/>
        <end position="130"/>
    </location>
</feature>
<feature type="compositionally biased region" description="Polar residues" evidence="2">
    <location>
        <begin position="139"/>
        <end position="151"/>
    </location>
</feature>
<feature type="compositionally biased region" description="Low complexity" evidence="2">
    <location>
        <begin position="165"/>
        <end position="176"/>
    </location>
</feature>
<feature type="compositionally biased region" description="Polar residues" evidence="2">
    <location>
        <begin position="1001"/>
        <end position="1011"/>
    </location>
</feature>
<feature type="compositionally biased region" description="Basic and acidic residues" evidence="2">
    <location>
        <begin position="1016"/>
        <end position="1025"/>
    </location>
</feature>
<feature type="compositionally biased region" description="Basic and acidic residues" evidence="2">
    <location>
        <begin position="1067"/>
        <end position="1084"/>
    </location>
</feature>
<feature type="compositionally biased region" description="Polar residues" evidence="2">
    <location>
        <begin position="1086"/>
        <end position="1095"/>
    </location>
</feature>
<feature type="compositionally biased region" description="Polar residues" evidence="2">
    <location>
        <begin position="1104"/>
        <end position="1115"/>
    </location>
</feature>
<feature type="modified residue" description="Phosphoserine" evidence="9">
    <location>
        <position position="94"/>
    </location>
</feature>
<feature type="modified residue" description="Phosphoserine" evidence="9">
    <location>
        <position position="1005"/>
    </location>
</feature>
<feature type="modified residue" description="Phosphoserine" evidence="9">
    <location>
        <position position="1009"/>
    </location>
</feature>
<feature type="mutagenesis site" description="Abolishes cytoplasmic microtubule (MT) nucleation and leads to MTs escaping from the nucleus to form abnormal MT bundles that curve around the cell tip and a curved cell shape. Abolishes interactions with gamma-tubulin complex components." evidence="10">
    <original>DNLRKEVFG</original>
    <variation>AAAAAAAAA</variation>
    <location>
        <begin position="259"/>
        <end position="267"/>
    </location>
</feature>
<feature type="mutagenesis site" description="Abolishes cytoplasmic microtubule (MT) nucleation and leads to MTs escaping from the nucleus to form abnormal MT bundles that curve around the cell tip and a curved cell shape. Abolishes interactions with gamma-tubulin complex components." evidence="10">
    <original>GLKLKCYFL</original>
    <variation>AAAAAAAAA</variation>
    <location>
        <begin position="267"/>
        <end position="275"/>
    </location>
</feature>
<feature type="mutagenesis site" description="Mildly curved cell shape. Phenotypically mostly normal." evidence="10">
    <original>QDIMKQNID</original>
    <variation>AAAAAAAAA</variation>
    <location>
        <begin position="288"/>
        <end position="296"/>
    </location>
</feature>
<feature type="mutagenesis site" description="Abolishes interaction with mto2 and with components of the gamma-tubulin complex. Abolishes cytoplasmic microtubule nucleation from non-SPB (spindle pole body) sites, but not from the SPB. Morphologically, cells are curved." evidence="10">
    <location>
        <begin position="523"/>
        <end position="537"/>
    </location>
</feature>
<proteinExistence type="evidence at protein level"/>
<dbReference type="EMBL" id="CU329672">
    <property type="protein sequence ID" value="CAA22653.1"/>
    <property type="molecule type" value="Genomic_DNA"/>
</dbReference>
<dbReference type="PIR" id="T41342">
    <property type="entry name" value="T41342"/>
</dbReference>
<dbReference type="RefSeq" id="NP_588284.1">
    <property type="nucleotide sequence ID" value="NM_001023274.2"/>
</dbReference>
<dbReference type="SMR" id="O94488"/>
<dbReference type="BioGRID" id="276030">
    <property type="interactions" value="96"/>
</dbReference>
<dbReference type="FunCoup" id="O94488">
    <property type="interactions" value="18"/>
</dbReference>
<dbReference type="IntAct" id="O94488">
    <property type="interactions" value="1"/>
</dbReference>
<dbReference type="STRING" id="284812.O94488"/>
<dbReference type="iPTMnet" id="O94488"/>
<dbReference type="PaxDb" id="4896-SPCC417.07c.1"/>
<dbReference type="EnsemblFungi" id="SPCC417.07c.1">
    <property type="protein sequence ID" value="SPCC417.07c.1:pep"/>
    <property type="gene ID" value="SPCC417.07c"/>
</dbReference>
<dbReference type="GeneID" id="2539467"/>
<dbReference type="KEGG" id="spo:2539467"/>
<dbReference type="PomBase" id="SPCC417.07c">
    <property type="gene designation" value="mto1"/>
</dbReference>
<dbReference type="VEuPathDB" id="FungiDB:SPCC417.07c"/>
<dbReference type="eggNOG" id="ENOG502QU0H">
    <property type="taxonomic scope" value="Eukaryota"/>
</dbReference>
<dbReference type="HOGENOM" id="CLU_279796_0_0_1"/>
<dbReference type="InParanoid" id="O94488"/>
<dbReference type="OMA" id="GNILFWP"/>
<dbReference type="PhylomeDB" id="O94488"/>
<dbReference type="PRO" id="PR:O94488"/>
<dbReference type="Proteomes" id="UP000002485">
    <property type="component" value="Chromosome III"/>
</dbReference>
<dbReference type="GO" id="GO:0000923">
    <property type="term" value="C:equatorial microtubule organizing center"/>
    <property type="evidence" value="ECO:0000314"/>
    <property type="project" value="PomBase"/>
</dbReference>
<dbReference type="GO" id="GO:0061496">
    <property type="term" value="C:half bridge of mitotic spindle pole body"/>
    <property type="evidence" value="ECO:0000314"/>
    <property type="project" value="PomBase"/>
</dbReference>
<dbReference type="GO" id="GO:0031021">
    <property type="term" value="C:interphase microtubule organizing center"/>
    <property type="evidence" value="ECO:0000314"/>
    <property type="project" value="PomBase"/>
</dbReference>
<dbReference type="GO" id="GO:0005874">
    <property type="term" value="C:microtubule"/>
    <property type="evidence" value="ECO:0007669"/>
    <property type="project" value="UniProtKB-KW"/>
</dbReference>
<dbReference type="GO" id="GO:0015630">
    <property type="term" value="C:microtubule cytoskeleton"/>
    <property type="evidence" value="ECO:0000314"/>
    <property type="project" value="PomBase"/>
</dbReference>
<dbReference type="GO" id="GO:0005815">
    <property type="term" value="C:microtubule organizing center"/>
    <property type="evidence" value="ECO:0000318"/>
    <property type="project" value="GO_Central"/>
</dbReference>
<dbReference type="GO" id="GO:0120104">
    <property type="term" value="C:mitotic actomyosin contractile ring, proximal layer"/>
    <property type="evidence" value="ECO:0000269"/>
    <property type="project" value="PomBase"/>
</dbReference>
<dbReference type="GO" id="GO:0044732">
    <property type="term" value="C:mitotic spindle pole body"/>
    <property type="evidence" value="ECO:0000314"/>
    <property type="project" value="PomBase"/>
</dbReference>
<dbReference type="GO" id="GO:0061499">
    <property type="term" value="C:outer plaque of mitotic spindle pole body"/>
    <property type="evidence" value="ECO:0000314"/>
    <property type="project" value="PomBase"/>
</dbReference>
<dbReference type="GO" id="GO:0099070">
    <property type="term" value="C:static microtubule bundle"/>
    <property type="evidence" value="ECO:0000314"/>
    <property type="project" value="PomBase"/>
</dbReference>
<dbReference type="GO" id="GO:0005516">
    <property type="term" value="F:calmodulin binding"/>
    <property type="evidence" value="ECO:0000314"/>
    <property type="project" value="PomBase"/>
</dbReference>
<dbReference type="GO" id="GO:0030954">
    <property type="term" value="P:astral microtubule nucleation"/>
    <property type="evidence" value="ECO:0000269"/>
    <property type="project" value="PomBase"/>
</dbReference>
<dbReference type="GO" id="GO:0072766">
    <property type="term" value="P:centromere clustering at the mitotic interphase nuclear envelope"/>
    <property type="evidence" value="ECO:0000315"/>
    <property type="project" value="PomBase"/>
</dbReference>
<dbReference type="GO" id="GO:0030989">
    <property type="term" value="P:dynein-driven meiotic oscillatory nuclear movement"/>
    <property type="evidence" value="ECO:0000315"/>
    <property type="project" value="PomBase"/>
</dbReference>
<dbReference type="GO" id="GO:0000132">
    <property type="term" value="P:establishment of mitotic spindle orientation"/>
    <property type="evidence" value="ECO:0000269"/>
    <property type="project" value="PomBase"/>
</dbReference>
<dbReference type="GO" id="GO:0000742">
    <property type="term" value="P:karyogamy involved in conjugation with cellular fusion"/>
    <property type="evidence" value="ECO:0000315"/>
    <property type="project" value="PomBase"/>
</dbReference>
<dbReference type="GO" id="GO:0051415">
    <property type="term" value="P:microtubule nucleation by interphase microtubule organizing center"/>
    <property type="evidence" value="ECO:0000315"/>
    <property type="project" value="PomBase"/>
</dbReference>
<dbReference type="GO" id="GO:0098863">
    <property type="term" value="P:nuclear migration by microtubule mediated pushing forces"/>
    <property type="evidence" value="ECO:0000315"/>
    <property type="project" value="PomBase"/>
</dbReference>
<dbReference type="GO" id="GO:0140405">
    <property type="term" value="P:spindle pole body-led chromosome movement during mitotic interphase"/>
    <property type="evidence" value="ECO:0000315"/>
    <property type="project" value="PomBase"/>
</dbReference>
<dbReference type="Gene3D" id="1.10.287.1490">
    <property type="match status" value="1"/>
</dbReference>
<dbReference type="InterPro" id="IPR012943">
    <property type="entry name" value="Cnn_1N"/>
</dbReference>
<dbReference type="InterPro" id="IPR024545">
    <property type="entry name" value="Mto1-like_Mto2p-bd"/>
</dbReference>
<dbReference type="Pfam" id="PF07989">
    <property type="entry name" value="Cnn_1N"/>
    <property type="match status" value="1"/>
</dbReference>
<dbReference type="Pfam" id="PF12808">
    <property type="entry name" value="Mto2_bdg"/>
    <property type="match status" value="1"/>
</dbReference>
<evidence type="ECO:0000255" key="1"/>
<evidence type="ECO:0000256" key="2">
    <source>
        <dbReference type="SAM" id="MobiDB-lite"/>
    </source>
</evidence>
<evidence type="ECO:0000269" key="3">
    <source>
    </source>
</evidence>
<evidence type="ECO:0000269" key="4">
    <source>
    </source>
</evidence>
<evidence type="ECO:0000269" key="5">
    <source>
    </source>
</evidence>
<evidence type="ECO:0000269" key="6">
    <source>
    </source>
</evidence>
<evidence type="ECO:0000269" key="7">
    <source>
    </source>
</evidence>
<evidence type="ECO:0000269" key="8">
    <source>
    </source>
</evidence>
<evidence type="ECO:0000269" key="9">
    <source>
    </source>
</evidence>
<evidence type="ECO:0000269" key="10">
    <source>
    </source>
</evidence>
<evidence type="ECO:0000305" key="11"/>
<evidence type="ECO:0000305" key="12">
    <source>
    </source>
</evidence>
<evidence type="ECO:0000312" key="13">
    <source>
        <dbReference type="PomBase" id="SPCC417.07c"/>
    </source>
</evidence>
<reference key="1">
    <citation type="journal article" date="2004" name="Curr. Biol.">
        <title>Microtubule nucleation at non-spindle pole body microtubule-organizing centers requires fission yeast centrosomin-related protein mod20p.</title>
        <authorList>
            <person name="Sawin K.E."/>
            <person name="Lourenco P.C.C."/>
            <person name="Snaith H.A."/>
        </authorList>
    </citation>
    <scope>NUCLEOTIDE SEQUENCE [GENOMIC DNA]</scope>
    <scope>FUNCTION</scope>
    <scope>INTERACTION WITH MCP6</scope>
    <scope>SUBCELLULAR LOCATION</scope>
    <scope>DISRUPTION PHENOTYPE</scope>
</reference>
<reference key="2">
    <citation type="journal article" date="2002" name="Nature">
        <title>The genome sequence of Schizosaccharomyces pombe.</title>
        <authorList>
            <person name="Wood V."/>
            <person name="Gwilliam R."/>
            <person name="Rajandream M.A."/>
            <person name="Lyne M.H."/>
            <person name="Lyne R."/>
            <person name="Stewart A."/>
            <person name="Sgouros J.G."/>
            <person name="Peat N."/>
            <person name="Hayles J."/>
            <person name="Baker S.G."/>
            <person name="Basham D."/>
            <person name="Bowman S."/>
            <person name="Brooks K."/>
            <person name="Brown D."/>
            <person name="Brown S."/>
            <person name="Chillingworth T."/>
            <person name="Churcher C.M."/>
            <person name="Collins M."/>
            <person name="Connor R."/>
            <person name="Cronin A."/>
            <person name="Davis P."/>
            <person name="Feltwell T."/>
            <person name="Fraser A."/>
            <person name="Gentles S."/>
            <person name="Goble A."/>
            <person name="Hamlin N."/>
            <person name="Harris D.E."/>
            <person name="Hidalgo J."/>
            <person name="Hodgson G."/>
            <person name="Holroyd S."/>
            <person name="Hornsby T."/>
            <person name="Howarth S."/>
            <person name="Huckle E.J."/>
            <person name="Hunt S."/>
            <person name="Jagels K."/>
            <person name="James K.D."/>
            <person name="Jones L."/>
            <person name="Jones M."/>
            <person name="Leather S."/>
            <person name="McDonald S."/>
            <person name="McLean J."/>
            <person name="Mooney P."/>
            <person name="Moule S."/>
            <person name="Mungall K.L."/>
            <person name="Murphy L.D."/>
            <person name="Niblett D."/>
            <person name="Odell C."/>
            <person name="Oliver K."/>
            <person name="O'Neil S."/>
            <person name="Pearson D."/>
            <person name="Quail M.A."/>
            <person name="Rabbinowitsch E."/>
            <person name="Rutherford K.M."/>
            <person name="Rutter S."/>
            <person name="Saunders D."/>
            <person name="Seeger K."/>
            <person name="Sharp S."/>
            <person name="Skelton J."/>
            <person name="Simmonds M.N."/>
            <person name="Squares R."/>
            <person name="Squares S."/>
            <person name="Stevens K."/>
            <person name="Taylor K."/>
            <person name="Taylor R.G."/>
            <person name="Tivey A."/>
            <person name="Walsh S.V."/>
            <person name="Warren T."/>
            <person name="Whitehead S."/>
            <person name="Woodward J.R."/>
            <person name="Volckaert G."/>
            <person name="Aert R."/>
            <person name="Robben J."/>
            <person name="Grymonprez B."/>
            <person name="Weltjens I."/>
            <person name="Vanstreels E."/>
            <person name="Rieger M."/>
            <person name="Schaefer M."/>
            <person name="Mueller-Auer S."/>
            <person name="Gabel C."/>
            <person name="Fuchs M."/>
            <person name="Duesterhoeft A."/>
            <person name="Fritzc C."/>
            <person name="Holzer E."/>
            <person name="Moestl D."/>
            <person name="Hilbert H."/>
            <person name="Borzym K."/>
            <person name="Langer I."/>
            <person name="Beck A."/>
            <person name="Lehrach H."/>
            <person name="Reinhardt R."/>
            <person name="Pohl T.M."/>
            <person name="Eger P."/>
            <person name="Zimmermann W."/>
            <person name="Wedler H."/>
            <person name="Wambutt R."/>
            <person name="Purnelle B."/>
            <person name="Goffeau A."/>
            <person name="Cadieu E."/>
            <person name="Dreano S."/>
            <person name="Gloux S."/>
            <person name="Lelaure V."/>
            <person name="Mottier S."/>
            <person name="Galibert F."/>
            <person name="Aves S.J."/>
            <person name="Xiang Z."/>
            <person name="Hunt C."/>
            <person name="Moore K."/>
            <person name="Hurst S.M."/>
            <person name="Lucas M."/>
            <person name="Rochet M."/>
            <person name="Gaillardin C."/>
            <person name="Tallada V.A."/>
            <person name="Garzon A."/>
            <person name="Thode G."/>
            <person name="Daga R.R."/>
            <person name="Cruzado L."/>
            <person name="Jimenez J."/>
            <person name="Sanchez M."/>
            <person name="del Rey F."/>
            <person name="Benito J."/>
            <person name="Dominguez A."/>
            <person name="Revuelta J.L."/>
            <person name="Moreno S."/>
            <person name="Armstrong J."/>
            <person name="Forsburg S.L."/>
            <person name="Cerutti L."/>
            <person name="Lowe T."/>
            <person name="McCombie W.R."/>
            <person name="Paulsen I."/>
            <person name="Potashkin J."/>
            <person name="Shpakovski G.V."/>
            <person name="Ussery D."/>
            <person name="Barrell B.G."/>
            <person name="Nurse P."/>
        </authorList>
    </citation>
    <scope>NUCLEOTIDE SEQUENCE [LARGE SCALE GENOMIC DNA]</scope>
    <source>
        <strain>972 / ATCC 24843</strain>
    </source>
</reference>
<reference key="3">
    <citation type="journal article" date="2004" name="Mol. Biol. Cell">
        <title>Identification and characterization of two novel proteins affecting fission yeast gamma-tubulin complex function.</title>
        <authorList>
            <person name="Venkatram S."/>
            <person name="Tasto J.J."/>
            <person name="Feoktistova A."/>
            <person name="Jennings J.L."/>
            <person name="Link A.J."/>
            <person name="Gould K.L."/>
        </authorList>
    </citation>
    <scope>FUNCTION</scope>
    <scope>SUBCELLULAR LOCATION</scope>
</reference>
<reference key="4">
    <citation type="journal article" date="2005" name="Mol. Biol. Cell">
        <title>Fission yeast mto2p regulates microtubule nucleation by the centrosomin-related protein mto1p.</title>
        <authorList>
            <person name="Samejima I."/>
            <person name="Lourenco P.C."/>
            <person name="Snaith H.A."/>
            <person name="Sawin K.E."/>
        </authorList>
    </citation>
    <scope>FUNCTION</scope>
    <scope>INTERACTION WITH MTO2</scope>
    <scope>SUBCELLULAR LOCATION</scope>
    <scope>DISRUPTION PHENOTYPE</scope>
</reference>
<reference key="5">
    <citation type="journal article" date="2005" name="Mol. Biol. Cell">
        <title>Mto2p, a novel fission yeast protein required for cytoplasmic microtubule organization and anchoring of the cytokinetic actin ring.</title>
        <authorList>
            <person name="Venkatram S."/>
            <person name="Jennings J.L."/>
            <person name="Link A."/>
            <person name="Gould K.L."/>
        </authorList>
    </citation>
    <scope>INTERACTION WITH MTO2</scope>
    <scope>IDENTIFICATION BY MASS SPECTROMETRY</scope>
</reference>
<reference key="6">
    <citation type="journal article" date="2006" name="Nat. Biotechnol.">
        <title>ORFeome cloning and global analysis of protein localization in the fission yeast Schizosaccharomyces pombe.</title>
        <authorList>
            <person name="Matsuyama A."/>
            <person name="Arai R."/>
            <person name="Yashiroda Y."/>
            <person name="Shirai A."/>
            <person name="Kamata A."/>
            <person name="Sekido S."/>
            <person name="Kobayashi Y."/>
            <person name="Hashimoto A."/>
            <person name="Hamamoto M."/>
            <person name="Hiraoka Y."/>
            <person name="Horinouchi S."/>
            <person name="Yoshida M."/>
        </authorList>
    </citation>
    <scope>SUBCELLULAR LOCATION [LARGE SCALE ANALYSIS]</scope>
</reference>
<reference key="7">
    <citation type="journal article" date="2007" name="J. Cell Sci.">
        <title>The Dam1/DASH complex is required for the retrieval of unclustered kinetochores in fission yeast.</title>
        <authorList>
            <person name="Franco A."/>
            <person name="Meadows J.C."/>
            <person name="Millar J.B."/>
        </authorList>
    </citation>
    <scope>DISRUPTION PHENOTYPE</scope>
</reference>
<reference key="8">
    <citation type="journal article" date="2008" name="J. Cell Sci.">
        <title>Two distinct regions of Mto1 are required for normal microtubule nucleation and efficient association with the gamma-tubulin complex in vivo.</title>
        <authorList>
            <person name="Samejima I."/>
            <person name="Miller V.J."/>
            <person name="Groocock L.M."/>
            <person name="Sawin K.E."/>
        </authorList>
    </citation>
    <scope>FUNCTION</scope>
    <scope>INTERACTION WITH MTO2; ALP4; ALP6 AND GTB1</scope>
    <scope>SUBCELLULAR LOCATION</scope>
    <scope>DISRUPTION PHENOTYPE</scope>
    <scope>MUTAGENESIS OF 259-ASP--GLY-267; 267-GLY--LEU-275; 288-GLN--ASP-296 AND 523-LEU--LEU-537</scope>
</reference>
<reference key="9">
    <citation type="journal article" date="2008" name="J. Proteome Res.">
        <title>Phosphoproteome analysis of fission yeast.</title>
        <authorList>
            <person name="Wilson-Grady J.T."/>
            <person name="Villen J."/>
            <person name="Gygi S.P."/>
        </authorList>
    </citation>
    <scope>PHOSPHORYLATION [LARGE SCALE ANALYSIS] AT SER-94; SER-1005 AND SER-1009</scope>
    <scope>IDENTIFICATION BY MASS SPECTROMETRY</scope>
</reference>
<keyword id="KW-0175">Coiled coil</keyword>
<keyword id="KW-0963">Cytoplasm</keyword>
<keyword id="KW-0206">Cytoskeleton</keyword>
<keyword id="KW-0493">Microtubule</keyword>
<keyword id="KW-0597">Phosphoprotein</keyword>
<keyword id="KW-1185">Reference proteome</keyword>